<comment type="subcellular location">
    <subcellularLocation>
        <location evidence="2">Host membrane</location>
        <topology evidence="2">Multi-pass membrane protein</topology>
    </subcellularLocation>
</comment>
<feature type="chain" id="PRO_0000384881" description="Putative transmembrane protein ORF13">
    <location>
        <begin position="1"/>
        <end position="99"/>
    </location>
</feature>
<feature type="transmembrane region" description="Helical" evidence="1">
    <location>
        <begin position="8"/>
        <end position="28"/>
    </location>
</feature>
<feature type="transmembrane region" description="Helical" evidence="1">
    <location>
        <begin position="42"/>
        <end position="62"/>
    </location>
</feature>
<feature type="transmembrane region" description="Helical" evidence="1">
    <location>
        <begin position="73"/>
        <end position="93"/>
    </location>
</feature>
<organism>
    <name type="scientific">His1 virus (isolate Australia/Victoria)</name>
    <name type="common">His1V</name>
    <name type="synonym">Haloarcula hispanica virus 1</name>
    <dbReference type="NCBI Taxonomy" id="654912"/>
    <lineage>
        <taxon>Viruses</taxon>
        <taxon>Viruses incertae sedis</taxon>
        <taxon>Halspiviridae</taxon>
        <taxon>Salterprovirus</taxon>
        <taxon>Salterprovirus His1</taxon>
    </lineage>
</organism>
<organismHost>
    <name type="scientific">Haloarcula hispanica</name>
    <dbReference type="NCBI Taxonomy" id="51589"/>
</organismHost>
<keyword id="KW-1043">Host membrane</keyword>
<keyword id="KW-0472">Membrane</keyword>
<keyword id="KW-1185">Reference proteome</keyword>
<keyword id="KW-0812">Transmembrane</keyword>
<keyword id="KW-1133">Transmembrane helix</keyword>
<reference key="1">
    <citation type="journal article" date="2006" name="Virology">
        <title>His1 and His2 are distantly related, spindle-shaped haloviruses belonging to the novel virus group, Salterprovirus.</title>
        <authorList>
            <person name="Bath C."/>
            <person name="Cukalac T."/>
            <person name="Porter K."/>
            <person name="Dyall-Smith M.L."/>
        </authorList>
    </citation>
    <scope>NUCLEOTIDE SEQUENCE [GENOMIC DNA]</scope>
</reference>
<evidence type="ECO:0000255" key="1"/>
<evidence type="ECO:0000305" key="2"/>
<gene>
    <name type="ORF">ORF13</name>
</gene>
<proteinExistence type="predicted"/>
<accession>Q25BI2</accession>
<dbReference type="EMBL" id="AF191796">
    <property type="protein sequence ID" value="AAQ13728.1"/>
    <property type="molecule type" value="Genomic_DNA"/>
</dbReference>
<dbReference type="RefSeq" id="YP_529525.1">
    <property type="nucleotide sequence ID" value="NC_007914.1"/>
</dbReference>
<dbReference type="KEGG" id="vg:5142403"/>
<dbReference type="Proteomes" id="UP000007024">
    <property type="component" value="Segment"/>
</dbReference>
<dbReference type="GO" id="GO:0033644">
    <property type="term" value="C:host cell membrane"/>
    <property type="evidence" value="ECO:0007669"/>
    <property type="project" value="UniProtKB-SubCell"/>
</dbReference>
<dbReference type="GO" id="GO:0016020">
    <property type="term" value="C:membrane"/>
    <property type="evidence" value="ECO:0007669"/>
    <property type="project" value="UniProtKB-KW"/>
</dbReference>
<dbReference type="InterPro" id="IPR043717">
    <property type="entry name" value="DUF5658"/>
</dbReference>
<dbReference type="Pfam" id="PF18902">
    <property type="entry name" value="DUF5658"/>
    <property type="match status" value="1"/>
</dbReference>
<sequence length="99" mass="10651">MNYWHSAIATFGIGDTVTTIIGLSMAGIYEANPAANTILGELGLFGIIAAKVLYFGLMYIIVKSMPEHSRKYGPITITVLGTLICLWNIAIIATQVLGF</sequence>
<protein>
    <recommendedName>
        <fullName>Putative transmembrane protein ORF13</fullName>
    </recommendedName>
</protein>
<name>Y013_HIS1I</name>